<keyword id="KW-0067">ATP-binding</keyword>
<keyword id="KW-0143">Chaperone</keyword>
<keyword id="KW-0547">Nucleotide-binding</keyword>
<keyword id="KW-0597">Phosphoprotein</keyword>
<keyword id="KW-0346">Stress response</keyword>
<reference key="1">
    <citation type="journal article" date="2010" name="Genome Biol. Evol.">
        <title>Continuing evolution of Burkholderia mallei through genome reduction and large-scale rearrangements.</title>
        <authorList>
            <person name="Losada L."/>
            <person name="Ronning C.M."/>
            <person name="DeShazer D."/>
            <person name="Woods D."/>
            <person name="Fedorova N."/>
            <person name="Kim H.S."/>
            <person name="Shabalina S.A."/>
            <person name="Pearson T.R."/>
            <person name="Brinkac L."/>
            <person name="Tan P."/>
            <person name="Nandi T."/>
            <person name="Crabtree J."/>
            <person name="Badger J."/>
            <person name="Beckstrom-Sternberg S."/>
            <person name="Saqib M."/>
            <person name="Schutzer S.E."/>
            <person name="Keim P."/>
            <person name="Nierman W.C."/>
        </authorList>
    </citation>
    <scope>NUCLEOTIDE SEQUENCE [LARGE SCALE GENOMIC DNA]</scope>
    <source>
        <strain>NCTC 10229</strain>
    </source>
</reference>
<dbReference type="EMBL" id="CP000546">
    <property type="protein sequence ID" value="ABN02773.1"/>
    <property type="molecule type" value="Genomic_DNA"/>
</dbReference>
<dbReference type="RefSeq" id="WP_004194034.1">
    <property type="nucleotide sequence ID" value="NC_008836.1"/>
</dbReference>
<dbReference type="SMR" id="A2S565"/>
<dbReference type="GeneID" id="92980018"/>
<dbReference type="KEGG" id="bml:BMA10229_A1099"/>
<dbReference type="HOGENOM" id="CLU_005965_2_1_4"/>
<dbReference type="Proteomes" id="UP000002283">
    <property type="component" value="Chromosome I"/>
</dbReference>
<dbReference type="GO" id="GO:0005524">
    <property type="term" value="F:ATP binding"/>
    <property type="evidence" value="ECO:0007669"/>
    <property type="project" value="UniProtKB-UniRule"/>
</dbReference>
<dbReference type="GO" id="GO:0140662">
    <property type="term" value="F:ATP-dependent protein folding chaperone"/>
    <property type="evidence" value="ECO:0007669"/>
    <property type="project" value="InterPro"/>
</dbReference>
<dbReference type="GO" id="GO:0051082">
    <property type="term" value="F:unfolded protein binding"/>
    <property type="evidence" value="ECO:0007669"/>
    <property type="project" value="InterPro"/>
</dbReference>
<dbReference type="CDD" id="cd10234">
    <property type="entry name" value="ASKHA_NBD_HSP70_DnaK-like"/>
    <property type="match status" value="1"/>
</dbReference>
<dbReference type="FunFam" id="2.60.34.10:FF:000014">
    <property type="entry name" value="Chaperone protein DnaK HSP70"/>
    <property type="match status" value="1"/>
</dbReference>
<dbReference type="FunFam" id="1.20.1270.10:FF:000001">
    <property type="entry name" value="Molecular chaperone DnaK"/>
    <property type="match status" value="1"/>
</dbReference>
<dbReference type="FunFam" id="3.30.420.40:FF:000004">
    <property type="entry name" value="Molecular chaperone DnaK"/>
    <property type="match status" value="1"/>
</dbReference>
<dbReference type="FunFam" id="3.90.640.10:FF:000003">
    <property type="entry name" value="Molecular chaperone DnaK"/>
    <property type="match status" value="1"/>
</dbReference>
<dbReference type="Gene3D" id="1.20.1270.10">
    <property type="match status" value="1"/>
</dbReference>
<dbReference type="Gene3D" id="3.30.420.40">
    <property type="match status" value="2"/>
</dbReference>
<dbReference type="Gene3D" id="3.90.640.10">
    <property type="entry name" value="Actin, Chain A, domain 4"/>
    <property type="match status" value="1"/>
</dbReference>
<dbReference type="Gene3D" id="2.60.34.10">
    <property type="entry name" value="Substrate Binding Domain Of DNAk, Chain A, domain 1"/>
    <property type="match status" value="1"/>
</dbReference>
<dbReference type="HAMAP" id="MF_00332">
    <property type="entry name" value="DnaK"/>
    <property type="match status" value="1"/>
</dbReference>
<dbReference type="InterPro" id="IPR043129">
    <property type="entry name" value="ATPase_NBD"/>
</dbReference>
<dbReference type="InterPro" id="IPR012725">
    <property type="entry name" value="Chaperone_DnaK"/>
</dbReference>
<dbReference type="InterPro" id="IPR018181">
    <property type="entry name" value="Heat_shock_70_CS"/>
</dbReference>
<dbReference type="InterPro" id="IPR029048">
    <property type="entry name" value="HSP70_C_sf"/>
</dbReference>
<dbReference type="InterPro" id="IPR029047">
    <property type="entry name" value="HSP70_peptide-bd_sf"/>
</dbReference>
<dbReference type="InterPro" id="IPR013126">
    <property type="entry name" value="Hsp_70_fam"/>
</dbReference>
<dbReference type="NCBIfam" id="NF001413">
    <property type="entry name" value="PRK00290.1"/>
    <property type="match status" value="1"/>
</dbReference>
<dbReference type="NCBIfam" id="NF003520">
    <property type="entry name" value="PRK05183.1"/>
    <property type="match status" value="1"/>
</dbReference>
<dbReference type="NCBIfam" id="TIGR02350">
    <property type="entry name" value="prok_dnaK"/>
    <property type="match status" value="1"/>
</dbReference>
<dbReference type="PANTHER" id="PTHR19375">
    <property type="entry name" value="HEAT SHOCK PROTEIN 70KDA"/>
    <property type="match status" value="1"/>
</dbReference>
<dbReference type="Pfam" id="PF00012">
    <property type="entry name" value="HSP70"/>
    <property type="match status" value="1"/>
</dbReference>
<dbReference type="PRINTS" id="PR00301">
    <property type="entry name" value="HEATSHOCK70"/>
</dbReference>
<dbReference type="SUPFAM" id="SSF53067">
    <property type="entry name" value="Actin-like ATPase domain"/>
    <property type="match status" value="2"/>
</dbReference>
<dbReference type="SUPFAM" id="SSF100934">
    <property type="entry name" value="Heat shock protein 70kD (HSP70), C-terminal subdomain"/>
    <property type="match status" value="1"/>
</dbReference>
<dbReference type="SUPFAM" id="SSF100920">
    <property type="entry name" value="Heat shock protein 70kD (HSP70), peptide-binding domain"/>
    <property type="match status" value="1"/>
</dbReference>
<dbReference type="PROSITE" id="PS00297">
    <property type="entry name" value="HSP70_1"/>
    <property type="match status" value="1"/>
</dbReference>
<dbReference type="PROSITE" id="PS00329">
    <property type="entry name" value="HSP70_2"/>
    <property type="match status" value="1"/>
</dbReference>
<dbReference type="PROSITE" id="PS01036">
    <property type="entry name" value="HSP70_3"/>
    <property type="match status" value="1"/>
</dbReference>
<feature type="chain" id="PRO_1000059521" description="Chaperone protein DnaK">
    <location>
        <begin position="1"/>
        <end position="650"/>
    </location>
</feature>
<feature type="region of interest" description="Disordered" evidence="2">
    <location>
        <begin position="611"/>
        <end position="650"/>
    </location>
</feature>
<feature type="compositionally biased region" description="Low complexity" evidence="2">
    <location>
        <begin position="611"/>
        <end position="636"/>
    </location>
</feature>
<feature type="modified residue" description="Phosphothreonine; by autocatalysis" evidence="1">
    <location>
        <position position="200"/>
    </location>
</feature>
<protein>
    <recommendedName>
        <fullName evidence="1">Chaperone protein DnaK</fullName>
    </recommendedName>
    <alternativeName>
        <fullName evidence="1">HSP70</fullName>
    </alternativeName>
    <alternativeName>
        <fullName evidence="1">Heat shock 70 kDa protein</fullName>
    </alternativeName>
    <alternativeName>
        <fullName evidence="1">Heat shock protein 70</fullName>
    </alternativeName>
</protein>
<evidence type="ECO:0000255" key="1">
    <source>
        <dbReference type="HAMAP-Rule" id="MF_00332"/>
    </source>
</evidence>
<evidence type="ECO:0000256" key="2">
    <source>
        <dbReference type="SAM" id="MobiDB-lite"/>
    </source>
</evidence>
<comment type="function">
    <text evidence="1">Acts as a chaperone.</text>
</comment>
<comment type="induction">
    <text evidence="1">By stress conditions e.g. heat shock.</text>
</comment>
<comment type="similarity">
    <text evidence="1">Belongs to the heat shock protein 70 family.</text>
</comment>
<sequence length="650" mass="69702">MGKIIGIDLGTTNSCVAIMEGNQVKVIENSEGARTTPSIIAYMDDNEVLVGAPAKRQSVTNPKNTLFAVKRLIGRRFEEKEVQKDIGLMPYAIIKADNGDAWVEAHGEKLAPPQVSAEVLRKMKKTAEDYLGEPVTEAVITVPAYFNDSQRQATKDAGRIAGLEVKRIINEPTAAALAFGLDKAEKGDRKIAVYDLGGGTFDVSIIEIADVDGEMQFEVLSTNGDTFLGGEDFDQRIIDYIIGEFKKEQGVDLSKDVLALQRLKEAAEKAKIELSSSQQTEINLPYITADASGPKHLNLKVTRAKLEALVEDLVERTIEPCRTAIKDAGVKVSDIDDVILVGGQTRMPKVQEKVKEFFGKEPRRDVNPDEAVAVGAAIQGQVLSGDRKDVLLLDVTPLSLGIETLGGVMTKMINKNTTIPTKHAQVYSTADDNQGAVTIKVFQGEREMAAGNKLLGEFNLEGIPPAPRGVPQIEVTFDIDANGILHVGAKDKATGKENKITIKANSGLSEAEIEKMVKDAEANAAEDHKLRELAESRNQGDALVHSTKKALTEYGDKLEAGEKEKIEAALKELEDVLKNASSDKAAIDAKVEAVATASQKLGEKMYADMQAQQAGAAGAAGAAAEGASAQGGAQPADDVVDADFKEVKKD</sequence>
<gene>
    <name evidence="1" type="primary">dnaK</name>
    <name type="ordered locus">BMA10229_A1099</name>
</gene>
<proteinExistence type="inferred from homology"/>
<accession>A2S565</accession>
<organism>
    <name type="scientific">Burkholderia mallei (strain NCTC 10229)</name>
    <dbReference type="NCBI Taxonomy" id="412022"/>
    <lineage>
        <taxon>Bacteria</taxon>
        <taxon>Pseudomonadati</taxon>
        <taxon>Pseudomonadota</taxon>
        <taxon>Betaproteobacteria</taxon>
        <taxon>Burkholderiales</taxon>
        <taxon>Burkholderiaceae</taxon>
        <taxon>Burkholderia</taxon>
        <taxon>pseudomallei group</taxon>
    </lineage>
</organism>
<name>DNAK_BURM9</name>